<keyword id="KW-1015">Disulfide bond</keyword>
<keyword id="KW-0256">Endoplasmic reticulum</keyword>
<keyword id="KW-0413">Isomerase</keyword>
<keyword id="KW-0676">Redox-active center</keyword>
<keyword id="KW-1185">Reference proteome</keyword>
<keyword id="KW-0677">Repeat</keyword>
<keyword id="KW-0732">Signal</keyword>
<protein>
    <recommendedName>
        <fullName>Protein disulfide-isomerase 2</fullName>
        <shortName>PDI2</shortName>
        <ecNumber>5.3.4.1</ecNumber>
    </recommendedName>
</protein>
<feature type="signal peptide" evidence="2">
    <location>
        <begin position="1"/>
        <end position="20"/>
    </location>
</feature>
<feature type="chain" id="PRO_0000327613" description="Protein disulfide-isomerase 2">
    <location>
        <begin position="21"/>
        <end position="513"/>
    </location>
</feature>
<feature type="domain" description="Thioredoxin 1" evidence="3">
    <location>
        <begin position="21"/>
        <end position="147"/>
    </location>
</feature>
<feature type="domain" description="Thioredoxin 2" evidence="3">
    <location>
        <begin position="355"/>
        <end position="486"/>
    </location>
</feature>
<feature type="region of interest" description="Disordered" evidence="5">
    <location>
        <begin position="491"/>
        <end position="513"/>
    </location>
</feature>
<feature type="short sequence motif" description="Prevents secretion from ER" evidence="4">
    <location>
        <begin position="510"/>
        <end position="513"/>
    </location>
</feature>
<feature type="compositionally biased region" description="Basic and acidic residues" evidence="5">
    <location>
        <begin position="500"/>
        <end position="513"/>
    </location>
</feature>
<feature type="active site" description="Nucleophile" evidence="1">
    <location>
        <position position="70"/>
    </location>
</feature>
<feature type="active site" description="Nucleophile" evidence="1">
    <location>
        <position position="73"/>
    </location>
</feature>
<feature type="active site" description="Nucleophile" evidence="1">
    <location>
        <position position="406"/>
    </location>
</feature>
<feature type="active site" description="Nucleophile" evidence="1">
    <location>
        <position position="409"/>
    </location>
</feature>
<feature type="disulfide bond" description="Redox-active" evidence="3">
    <location>
        <begin position="70"/>
        <end position="73"/>
    </location>
</feature>
<feature type="disulfide bond" description="Redox-active" evidence="3">
    <location>
        <begin position="406"/>
        <end position="409"/>
    </location>
</feature>
<proteinExistence type="inferred from homology"/>
<reference key="1">
    <citation type="journal article" date="2005" name="Nature">
        <title>The genome of the social amoeba Dictyostelium discoideum.</title>
        <authorList>
            <person name="Eichinger L."/>
            <person name="Pachebat J.A."/>
            <person name="Gloeckner G."/>
            <person name="Rajandream M.A."/>
            <person name="Sucgang R."/>
            <person name="Berriman M."/>
            <person name="Song J."/>
            <person name="Olsen R."/>
            <person name="Szafranski K."/>
            <person name="Xu Q."/>
            <person name="Tunggal B."/>
            <person name="Kummerfeld S."/>
            <person name="Madera M."/>
            <person name="Konfortov B.A."/>
            <person name="Rivero F."/>
            <person name="Bankier A.T."/>
            <person name="Lehmann R."/>
            <person name="Hamlin N."/>
            <person name="Davies R."/>
            <person name="Gaudet P."/>
            <person name="Fey P."/>
            <person name="Pilcher K."/>
            <person name="Chen G."/>
            <person name="Saunders D."/>
            <person name="Sodergren E.J."/>
            <person name="Davis P."/>
            <person name="Kerhornou A."/>
            <person name="Nie X."/>
            <person name="Hall N."/>
            <person name="Anjard C."/>
            <person name="Hemphill L."/>
            <person name="Bason N."/>
            <person name="Farbrother P."/>
            <person name="Desany B."/>
            <person name="Just E."/>
            <person name="Morio T."/>
            <person name="Rost R."/>
            <person name="Churcher C.M."/>
            <person name="Cooper J."/>
            <person name="Haydock S."/>
            <person name="van Driessche N."/>
            <person name="Cronin A."/>
            <person name="Goodhead I."/>
            <person name="Muzny D.M."/>
            <person name="Mourier T."/>
            <person name="Pain A."/>
            <person name="Lu M."/>
            <person name="Harper D."/>
            <person name="Lindsay R."/>
            <person name="Hauser H."/>
            <person name="James K.D."/>
            <person name="Quiles M."/>
            <person name="Madan Babu M."/>
            <person name="Saito T."/>
            <person name="Buchrieser C."/>
            <person name="Wardroper A."/>
            <person name="Felder M."/>
            <person name="Thangavelu M."/>
            <person name="Johnson D."/>
            <person name="Knights A."/>
            <person name="Loulseged H."/>
            <person name="Mungall K.L."/>
            <person name="Oliver K."/>
            <person name="Price C."/>
            <person name="Quail M.A."/>
            <person name="Urushihara H."/>
            <person name="Hernandez J."/>
            <person name="Rabbinowitsch E."/>
            <person name="Steffen D."/>
            <person name="Sanders M."/>
            <person name="Ma J."/>
            <person name="Kohara Y."/>
            <person name="Sharp S."/>
            <person name="Simmonds M.N."/>
            <person name="Spiegler S."/>
            <person name="Tivey A."/>
            <person name="Sugano S."/>
            <person name="White B."/>
            <person name="Walker D."/>
            <person name="Woodward J.R."/>
            <person name="Winckler T."/>
            <person name="Tanaka Y."/>
            <person name="Shaulsky G."/>
            <person name="Schleicher M."/>
            <person name="Weinstock G.M."/>
            <person name="Rosenthal A."/>
            <person name="Cox E.C."/>
            <person name="Chisholm R.L."/>
            <person name="Gibbs R.A."/>
            <person name="Loomis W.F."/>
            <person name="Platzer M."/>
            <person name="Kay R.R."/>
            <person name="Williams J.G."/>
            <person name="Dear P.H."/>
            <person name="Noegel A.A."/>
            <person name="Barrell B.G."/>
            <person name="Kuspa A."/>
        </authorList>
    </citation>
    <scope>NUCLEOTIDE SEQUENCE [LARGE SCALE GENOMIC DNA]</scope>
    <source>
        <strain>AX4</strain>
    </source>
</reference>
<sequence length="513" mass="57753">MNKFLALLFVLALFANIAFSCEGHPEHDHGDGDHEHDHDESFVKILDSDNFHNSVSEHDVTLVMFYAPWCGHCKTLKPLYEEAAKQLSANKKIAIAKVDCTQHEQLCKQNKVQGYPTLVVFKNGKAEPYEGDRTTKSIVQTLEEELKPTISTLESNEDIEEFKKQHPISVVGFFDNDHDDRFKLFSELAGNNKKSAKFAVVIDKDFSKEHVESTPNVVLFRSFDEPTVAHKGEFDSESLIKFIKGNSVPLLGEINRNTYKKYESIAVPLAYLFIDSTQDNTQVLEDVKKIATSQKGNAVFCWVDMKKFPQQATHMGLSGKVVPAISVDSVANKARYNFDEKETFSFDTVSKWIQDVIGGKVSPFVKSQPEPESNDAPVKVAVGTTFKKLVLDSPKDVLVEFYAPWCGHCKNLAPIYDKLGEYLKDVESVSIVKIDADSNDVPSDIEIRGYPTIMLFKADDKENPISYEGQRNDHMNFVEFIQDNAAIEFKLPSSQTDDNVESKKDSSAKHDEL</sequence>
<comment type="function">
    <text evidence="1">Participates in the folding of proteins containing disulfide bonds, may be involved in glycosylation, prolyl hydroxylation and triglyceride transfer.</text>
</comment>
<comment type="catalytic activity">
    <reaction>
        <text>Catalyzes the rearrangement of -S-S- bonds in proteins.</text>
        <dbReference type="EC" id="5.3.4.1"/>
    </reaction>
</comment>
<comment type="subcellular location">
    <subcellularLocation>
        <location evidence="4">Endoplasmic reticulum lumen</location>
    </subcellularLocation>
</comment>
<comment type="similarity">
    <text evidence="6">Belongs to the protein disulfide isomerase family.</text>
</comment>
<evidence type="ECO:0000250" key="1"/>
<evidence type="ECO:0000255" key="2"/>
<evidence type="ECO:0000255" key="3">
    <source>
        <dbReference type="PROSITE-ProRule" id="PRU00691"/>
    </source>
</evidence>
<evidence type="ECO:0000255" key="4">
    <source>
        <dbReference type="PROSITE-ProRule" id="PRU10138"/>
    </source>
</evidence>
<evidence type="ECO:0000256" key="5">
    <source>
        <dbReference type="SAM" id="MobiDB-lite"/>
    </source>
</evidence>
<evidence type="ECO:0000305" key="6"/>
<name>PDI2_DICDI</name>
<organism>
    <name type="scientific">Dictyostelium discoideum</name>
    <name type="common">Social amoeba</name>
    <dbReference type="NCBI Taxonomy" id="44689"/>
    <lineage>
        <taxon>Eukaryota</taxon>
        <taxon>Amoebozoa</taxon>
        <taxon>Evosea</taxon>
        <taxon>Eumycetozoa</taxon>
        <taxon>Dictyostelia</taxon>
        <taxon>Dictyosteliales</taxon>
        <taxon>Dictyosteliaceae</taxon>
        <taxon>Dictyostelium</taxon>
    </lineage>
</organism>
<gene>
    <name type="primary">pdi2</name>
    <name type="ORF">DDB_G0291434</name>
</gene>
<dbReference type="EC" id="5.3.4.1"/>
<dbReference type="EMBL" id="AAFI02000177">
    <property type="protein sequence ID" value="EAL61701.1"/>
    <property type="molecule type" value="Genomic_DNA"/>
</dbReference>
<dbReference type="RefSeq" id="XP_635206.1">
    <property type="nucleotide sequence ID" value="XM_630114.1"/>
</dbReference>
<dbReference type="SMR" id="Q54EN4"/>
<dbReference type="FunCoup" id="Q54EN4">
    <property type="interactions" value="706"/>
</dbReference>
<dbReference type="STRING" id="44689.Q54EN4"/>
<dbReference type="PaxDb" id="44689-DDB0231409"/>
<dbReference type="EnsemblProtists" id="EAL61701">
    <property type="protein sequence ID" value="EAL61701"/>
    <property type="gene ID" value="DDB_G0291434"/>
</dbReference>
<dbReference type="GeneID" id="8628151"/>
<dbReference type="KEGG" id="ddi:DDB_G0291434"/>
<dbReference type="dictyBase" id="DDB_G0291434">
    <property type="gene designation" value="pdi2"/>
</dbReference>
<dbReference type="VEuPathDB" id="AmoebaDB:DDB_G0291434"/>
<dbReference type="eggNOG" id="KOG0190">
    <property type="taxonomic scope" value="Eukaryota"/>
</dbReference>
<dbReference type="HOGENOM" id="CLU_025879_5_0_1"/>
<dbReference type="InParanoid" id="Q54EN4"/>
<dbReference type="OMA" id="REDYVWS"/>
<dbReference type="PhylomeDB" id="Q54EN4"/>
<dbReference type="Reactome" id="R-DDI-901042">
    <property type="pathway name" value="Calnexin/calreticulin cycle"/>
</dbReference>
<dbReference type="PRO" id="PR:Q54EN4"/>
<dbReference type="Proteomes" id="UP000002195">
    <property type="component" value="Chromosome 6"/>
</dbReference>
<dbReference type="GO" id="GO:0005783">
    <property type="term" value="C:endoplasmic reticulum"/>
    <property type="evidence" value="ECO:0000318"/>
    <property type="project" value="GO_Central"/>
</dbReference>
<dbReference type="GO" id="GO:0005788">
    <property type="term" value="C:endoplasmic reticulum lumen"/>
    <property type="evidence" value="ECO:0007669"/>
    <property type="project" value="UniProtKB-SubCell"/>
</dbReference>
<dbReference type="GO" id="GO:0031012">
    <property type="term" value="C:extracellular matrix"/>
    <property type="evidence" value="ECO:0007005"/>
    <property type="project" value="dictyBase"/>
</dbReference>
<dbReference type="GO" id="GO:0045335">
    <property type="term" value="C:phagocytic vesicle"/>
    <property type="evidence" value="ECO:0007005"/>
    <property type="project" value="dictyBase"/>
</dbReference>
<dbReference type="GO" id="GO:0003756">
    <property type="term" value="F:protein disulfide isomerase activity"/>
    <property type="evidence" value="ECO:0000250"/>
    <property type="project" value="dictyBase"/>
</dbReference>
<dbReference type="GO" id="GO:0006457">
    <property type="term" value="P:protein folding"/>
    <property type="evidence" value="ECO:0000250"/>
    <property type="project" value="dictyBase"/>
</dbReference>
<dbReference type="GO" id="GO:0009617">
    <property type="term" value="P:response to bacterium"/>
    <property type="evidence" value="ECO:0007007"/>
    <property type="project" value="dictyBase"/>
</dbReference>
<dbReference type="GO" id="GO:0034976">
    <property type="term" value="P:response to endoplasmic reticulum stress"/>
    <property type="evidence" value="ECO:0000318"/>
    <property type="project" value="GO_Central"/>
</dbReference>
<dbReference type="GO" id="GO:0019953">
    <property type="term" value="P:sexual reproduction"/>
    <property type="evidence" value="ECO:0000270"/>
    <property type="project" value="dictyBase"/>
</dbReference>
<dbReference type="CDD" id="cd02961">
    <property type="entry name" value="PDI_a_family"/>
    <property type="match status" value="1"/>
</dbReference>
<dbReference type="CDD" id="cd02995">
    <property type="entry name" value="PDI_a_PDI_a'_C"/>
    <property type="match status" value="1"/>
</dbReference>
<dbReference type="CDD" id="cd02982">
    <property type="entry name" value="PDI_b'_family"/>
    <property type="match status" value="1"/>
</dbReference>
<dbReference type="CDD" id="cd02981">
    <property type="entry name" value="PDI_b_family"/>
    <property type="match status" value="1"/>
</dbReference>
<dbReference type="FunFam" id="3.40.30.10:FF:000139">
    <property type="entry name" value="Protein disulfide-isomerase"/>
    <property type="match status" value="1"/>
</dbReference>
<dbReference type="FunFam" id="3.40.30.10:FF:000042">
    <property type="entry name" value="protein disulfide-isomerase A2"/>
    <property type="match status" value="1"/>
</dbReference>
<dbReference type="FunFam" id="3.40.30.10:FF:000017">
    <property type="entry name" value="Protein disulfide-isomerase A4"/>
    <property type="match status" value="1"/>
</dbReference>
<dbReference type="Gene3D" id="3.40.30.10">
    <property type="entry name" value="Glutaredoxin"/>
    <property type="match status" value="4"/>
</dbReference>
<dbReference type="InterPro" id="IPR005788">
    <property type="entry name" value="PDI_thioredoxin-like_dom"/>
</dbReference>
<dbReference type="InterPro" id="IPR005792">
    <property type="entry name" value="Prot_disulphide_isomerase"/>
</dbReference>
<dbReference type="InterPro" id="IPR036249">
    <property type="entry name" value="Thioredoxin-like_sf"/>
</dbReference>
<dbReference type="InterPro" id="IPR017937">
    <property type="entry name" value="Thioredoxin_CS"/>
</dbReference>
<dbReference type="InterPro" id="IPR013766">
    <property type="entry name" value="Thioredoxin_domain"/>
</dbReference>
<dbReference type="NCBIfam" id="TIGR01130">
    <property type="entry name" value="ER_PDI_fam"/>
    <property type="match status" value="1"/>
</dbReference>
<dbReference type="NCBIfam" id="TIGR01126">
    <property type="entry name" value="pdi_dom"/>
    <property type="match status" value="2"/>
</dbReference>
<dbReference type="PANTHER" id="PTHR18929">
    <property type="entry name" value="PROTEIN DISULFIDE ISOMERASE"/>
    <property type="match status" value="1"/>
</dbReference>
<dbReference type="PANTHER" id="PTHR18929:SF132">
    <property type="entry name" value="PROTEIN DISULFIDE-ISOMERASE A3"/>
    <property type="match status" value="1"/>
</dbReference>
<dbReference type="Pfam" id="PF00085">
    <property type="entry name" value="Thioredoxin"/>
    <property type="match status" value="2"/>
</dbReference>
<dbReference type="Pfam" id="PF13848">
    <property type="entry name" value="Thioredoxin_6"/>
    <property type="match status" value="1"/>
</dbReference>
<dbReference type="PRINTS" id="PR00421">
    <property type="entry name" value="THIOREDOXIN"/>
</dbReference>
<dbReference type="SUPFAM" id="SSF52833">
    <property type="entry name" value="Thioredoxin-like"/>
    <property type="match status" value="3"/>
</dbReference>
<dbReference type="PROSITE" id="PS00014">
    <property type="entry name" value="ER_TARGET"/>
    <property type="match status" value="1"/>
</dbReference>
<dbReference type="PROSITE" id="PS00194">
    <property type="entry name" value="THIOREDOXIN_1"/>
    <property type="match status" value="2"/>
</dbReference>
<dbReference type="PROSITE" id="PS51352">
    <property type="entry name" value="THIOREDOXIN_2"/>
    <property type="match status" value="2"/>
</dbReference>
<accession>Q54EN4</accession>